<proteinExistence type="evidence at protein level"/>
<keyword id="KW-0002">3D-structure</keyword>
<keyword id="KW-0238">DNA-binding</keyword>
<keyword id="KW-0539">Nucleus</keyword>
<keyword id="KW-0607">Phytochrome signaling pathway</keyword>
<keyword id="KW-1185">Reference proteome</keyword>
<keyword id="KW-0804">Transcription</keyword>
<keyword id="KW-0805">Transcription regulation</keyword>
<sequence length="292" mass="33615">MSNNQAFMELGWRNDVGSLAVKDQGMMSERARSDEDRLINGLKWGYGYFDHDQTDNYLQIVPEIHKEVENAKEDLLVVVPDEHSETDDHHHIKDFSERSDHRFYLRNKHENPKKRRIQVLSSDDESEEFTREVPSVTRKGSKRRRRDEKMSNKMRKLQQLVPNCHKTDKVSVLDKTIEYMKNLQLQLQMMSTVGVNPYFLPATLGFGMHNHMLTAMASAHGLNPANHMMPSPLIPALNWPLPPFTNISFPHSSSQSLFLTTSSPASSPQSLHGLVPYFPSFLDFSSHAMRRL</sequence>
<organism>
    <name type="scientific">Arabidopsis thaliana</name>
    <name type="common">Mouse-ear cress</name>
    <dbReference type="NCBI Taxonomy" id="3702"/>
    <lineage>
        <taxon>Eukaryota</taxon>
        <taxon>Viridiplantae</taxon>
        <taxon>Streptophyta</taxon>
        <taxon>Embryophyta</taxon>
        <taxon>Tracheophyta</taxon>
        <taxon>Spermatophyta</taxon>
        <taxon>Magnoliopsida</taxon>
        <taxon>eudicotyledons</taxon>
        <taxon>Gunneridae</taxon>
        <taxon>Pentapetalae</taxon>
        <taxon>rosids</taxon>
        <taxon>malvids</taxon>
        <taxon>Brassicales</taxon>
        <taxon>Brassicaceae</taxon>
        <taxon>Camelineae</taxon>
        <taxon>Arabidopsis</taxon>
    </lineage>
</organism>
<reference key="1">
    <citation type="journal article" date="2000" name="Plant Cell">
        <title>REP1, a basic helix-loop-helix protein, is required for a branch pathway of phytochrome A signaling in Arabidopsis.</title>
        <authorList>
            <person name="Soh M.-S."/>
            <person name="Kim Y.-M."/>
            <person name="Han S.-J."/>
            <person name="Song P.-S."/>
        </authorList>
    </citation>
    <scope>NUCLEOTIDE SEQUENCE [MRNA]</scope>
    <scope>FUNCTION</scope>
</reference>
<reference key="2">
    <citation type="journal article" date="2000" name="Genes Dev.">
        <title>HFR1 encodes an atypical bHLH protein that acts in phytochrome A signal transduction.</title>
        <authorList>
            <person name="Fairchild C.D."/>
            <person name="Schumaker M.A."/>
            <person name="Quail P.H."/>
        </authorList>
    </citation>
    <scope>NUCLEOTIDE SEQUENCE [MRNA]</scope>
    <scope>FUNCTION</scope>
    <source>
        <strain>cv. Landsberg erecta</strain>
        <tissue>Hypocotyl</tissue>
    </source>
</reference>
<reference key="3">
    <citation type="journal article" date="2000" name="Plant Cell">
        <title>Cloning of the Arabidopsis RSF1 gene by using a mapping strategy based on high-density DNA arrays and denaturing high-performance liquid chromatography.</title>
        <authorList>
            <person name="Spiegelman J.I."/>
            <person name="Mindrinos M.N."/>
            <person name="Fankhauser C."/>
            <person name="Richards D."/>
            <person name="Lutes J."/>
            <person name="Chory J."/>
            <person name="Oefner P.J."/>
        </authorList>
    </citation>
    <scope>NUCLEOTIDE SEQUENCE [GENOMIC DNA]</scope>
</reference>
<reference key="4">
    <citation type="submission" date="2000-11" db="EMBL/GenBank/DDBJ databases">
        <title>FBI1, an Arabidopsis bHLH protein involved in both cryptochrome 1 and phytochrome A signaling.</title>
        <authorList>
            <person name="Wu Y."/>
            <person name="Liu D."/>
            <person name="Yang H."/>
            <person name="Tang R."/>
            <person name="Cashmore A.R."/>
        </authorList>
    </citation>
    <scope>NUCLEOTIDE SEQUENCE [MRNA]</scope>
    <scope>FUNCTION</scope>
</reference>
<reference key="5">
    <citation type="journal article" date="2000" name="Nature">
        <title>Sequence and analysis of chromosome 1 of the plant Arabidopsis thaliana.</title>
        <authorList>
            <person name="Theologis A."/>
            <person name="Ecker J.R."/>
            <person name="Palm C.J."/>
            <person name="Federspiel N.A."/>
            <person name="Kaul S."/>
            <person name="White O."/>
            <person name="Alonso J."/>
            <person name="Altafi H."/>
            <person name="Araujo R."/>
            <person name="Bowman C.L."/>
            <person name="Brooks S.Y."/>
            <person name="Buehler E."/>
            <person name="Chan A."/>
            <person name="Chao Q."/>
            <person name="Chen H."/>
            <person name="Cheuk R.F."/>
            <person name="Chin C.W."/>
            <person name="Chung M.K."/>
            <person name="Conn L."/>
            <person name="Conway A.B."/>
            <person name="Conway A.R."/>
            <person name="Creasy T.H."/>
            <person name="Dewar K."/>
            <person name="Dunn P."/>
            <person name="Etgu P."/>
            <person name="Feldblyum T.V."/>
            <person name="Feng J.-D."/>
            <person name="Fong B."/>
            <person name="Fujii C.Y."/>
            <person name="Gill J.E."/>
            <person name="Goldsmith A.D."/>
            <person name="Haas B."/>
            <person name="Hansen N.F."/>
            <person name="Hughes B."/>
            <person name="Huizar L."/>
            <person name="Hunter J.L."/>
            <person name="Jenkins J."/>
            <person name="Johnson-Hopson C."/>
            <person name="Khan S."/>
            <person name="Khaykin E."/>
            <person name="Kim C.J."/>
            <person name="Koo H.L."/>
            <person name="Kremenetskaia I."/>
            <person name="Kurtz D.B."/>
            <person name="Kwan A."/>
            <person name="Lam B."/>
            <person name="Langin-Hooper S."/>
            <person name="Lee A."/>
            <person name="Lee J.M."/>
            <person name="Lenz C.A."/>
            <person name="Li J.H."/>
            <person name="Li Y.-P."/>
            <person name="Lin X."/>
            <person name="Liu S.X."/>
            <person name="Liu Z.A."/>
            <person name="Luros J.S."/>
            <person name="Maiti R."/>
            <person name="Marziali A."/>
            <person name="Militscher J."/>
            <person name="Miranda M."/>
            <person name="Nguyen M."/>
            <person name="Nierman W.C."/>
            <person name="Osborne B.I."/>
            <person name="Pai G."/>
            <person name="Peterson J."/>
            <person name="Pham P.K."/>
            <person name="Rizzo M."/>
            <person name="Rooney T."/>
            <person name="Rowley D."/>
            <person name="Sakano H."/>
            <person name="Salzberg S.L."/>
            <person name="Schwartz J.R."/>
            <person name="Shinn P."/>
            <person name="Southwick A.M."/>
            <person name="Sun H."/>
            <person name="Tallon L.J."/>
            <person name="Tambunga G."/>
            <person name="Toriumi M.J."/>
            <person name="Town C.D."/>
            <person name="Utterback T."/>
            <person name="Van Aken S."/>
            <person name="Vaysberg M."/>
            <person name="Vysotskaia V.S."/>
            <person name="Walker M."/>
            <person name="Wu D."/>
            <person name="Yu G."/>
            <person name="Fraser C.M."/>
            <person name="Venter J.C."/>
            <person name="Davis R.W."/>
        </authorList>
    </citation>
    <scope>NUCLEOTIDE SEQUENCE [LARGE SCALE GENOMIC DNA]</scope>
    <source>
        <strain>cv. Columbia</strain>
    </source>
</reference>
<reference key="6">
    <citation type="journal article" date="2017" name="Plant J.">
        <title>Araport11: a complete reannotation of the Arabidopsis thaliana reference genome.</title>
        <authorList>
            <person name="Cheng C.Y."/>
            <person name="Krishnakumar V."/>
            <person name="Chan A.P."/>
            <person name="Thibaud-Nissen F."/>
            <person name="Schobel S."/>
            <person name="Town C.D."/>
        </authorList>
    </citation>
    <scope>GENOME REANNOTATION</scope>
    <source>
        <strain>cv. Columbia</strain>
    </source>
</reference>
<reference key="7">
    <citation type="journal article" date="2002" name="Science">
        <title>Functional annotation of a full-length Arabidopsis cDNA collection.</title>
        <authorList>
            <person name="Seki M."/>
            <person name="Narusaka M."/>
            <person name="Kamiya A."/>
            <person name="Ishida J."/>
            <person name="Satou M."/>
            <person name="Sakurai T."/>
            <person name="Nakajima M."/>
            <person name="Enju A."/>
            <person name="Akiyama K."/>
            <person name="Oono Y."/>
            <person name="Muramatsu M."/>
            <person name="Hayashizaki Y."/>
            <person name="Kawai J."/>
            <person name="Carninci P."/>
            <person name="Itoh M."/>
            <person name="Ishii Y."/>
            <person name="Arakawa T."/>
            <person name="Shibata K."/>
            <person name="Shinagawa A."/>
            <person name="Shinozaki K."/>
        </authorList>
    </citation>
    <scope>NUCLEOTIDE SEQUENCE [LARGE SCALE MRNA] OF 150-292</scope>
    <source>
        <strain>cv. Columbia</strain>
    </source>
</reference>
<reference key="8">
    <citation type="journal article" date="2003" name="Mol. Biol. Evol.">
        <title>The basic helix-loop-helix transcription factor family in plants: a genome-wide study of protein structure and functional diversity.</title>
        <authorList>
            <person name="Heim M.A."/>
            <person name="Jakoby M."/>
            <person name="Werber M."/>
            <person name="Martin C."/>
            <person name="Weisshaar B."/>
            <person name="Bailey P.C."/>
        </authorList>
    </citation>
    <scope>TISSUE SPECIFICITY</scope>
    <scope>GENE FAMILY</scope>
    <scope>NOMENCLATURE</scope>
</reference>
<reference key="9">
    <citation type="journal article" date="2003" name="Plant Cell">
        <title>The Arabidopsis basic/helix-loop-helix transcription factor family.</title>
        <authorList>
            <person name="Toledo-Ortiz G."/>
            <person name="Huq E."/>
            <person name="Quail P.H."/>
        </authorList>
    </citation>
    <scope>GENE FAMILY</scope>
</reference>
<reference key="10">
    <citation type="journal article" date="2003" name="Plant Cell">
        <title>Update on the basic helix-loop-helix transcription factor gene family in Arabidopsis thaliana.</title>
        <authorList>
            <person name="Bailey P.C."/>
            <person name="Martin C."/>
            <person name="Toledo-Ortiz G."/>
            <person name="Quail P.H."/>
            <person name="Huq E."/>
            <person name="Heim M.A."/>
            <person name="Jakoby M."/>
            <person name="Werber M."/>
            <person name="Weisshaar B."/>
        </authorList>
    </citation>
    <scope>GENE FAMILY</scope>
    <scope>NOMENCLATURE</scope>
</reference>
<reference key="11">
    <citation type="journal article" date="2006" name="Plant Mol. Biol.">
        <title>KIDARI, encoding a non-DNA binding bHLH protein, represses light signal transduction in Arabidopsis thaliana.</title>
        <authorList>
            <person name="Hyun Y."/>
            <person name="Lee I."/>
        </authorList>
    </citation>
    <scope>INTERACTION WITH PRE6</scope>
</reference>
<reference key="12">
    <citation type="journal article" date="2009" name="Plant Cell">
        <title>FAR-RED ELONGATED HYPOCOTYL1 and FHY1-LIKE associate with the Arabidopsis transcription factors LAF1 and HFR1 to transmit phytochrome A signals for inhibition of hypocotyl elongation.</title>
        <authorList>
            <person name="Yang S.W."/>
            <person name="Jang I.-C."/>
            <person name="Henriques R."/>
            <person name="Chua N.-H."/>
        </authorList>
    </citation>
    <scope>FUNCTION</scope>
    <scope>DISRUPTION PHENOTYPE</scope>
    <scope>SUBCELLULAR LOCATION</scope>
    <scope>INTERACTION WITH PHYA; FHY1 AND FHL</scope>
    <source>
        <strain>cv. Columbia</strain>
    </source>
</reference>
<reference key="13">
    <citation type="journal article" date="2010" name="Plant Cell">
        <title>The Arabidopsis floral homeotic proteins APETALA3 and PISTILLATA negatively regulate the BANQUO genes implicated in light signaling.</title>
        <authorList>
            <person name="Mara C.D."/>
            <person name="Huang T."/>
            <person name="Irish V.F."/>
        </authorList>
    </citation>
    <scope>INTERACTION WITH PRE1; PRE2 AND PRE4</scope>
</reference>
<reference key="14">
    <citation type="journal article" date="2013" name="Mol. Cells">
        <title>A competitive peptide inhibitor KIDARI negatively regulates HFR1 by forming nonfunctional heterodimers in Arabidopsis photomorphogenesis.</title>
        <authorList>
            <person name="Hong S.Y."/>
            <person name="Seo P.J."/>
            <person name="Ryu J.Y."/>
            <person name="Cho S.H."/>
            <person name="Woo J.C."/>
            <person name="Park C.M."/>
        </authorList>
    </citation>
    <scope>INTERACTION WITH PRE6 AND PIF4</scope>
    <scope>SUBCELLULAR LOCATION</scope>
</reference>
<reference key="15">
    <citation type="journal article" date="2013" name="Mol. Cells">
        <title>Phytochrome-interacting factors have both shared and distinct biological roles.</title>
        <authorList>
            <person name="Jeong J."/>
            <person name="Choi G."/>
        </authorList>
    </citation>
    <scope>TISSUE SPECIFICITY</scope>
    <scope>DEVELOPMENTAL STAGE</scope>
    <scope>INDUCTION BY SALT; HEAT AND ABSCISIC ACID</scope>
    <scope>REVIEW</scope>
</reference>
<dbReference type="EMBL" id="AF288287">
    <property type="protein sequence ID" value="AAG45733.1"/>
    <property type="molecule type" value="mRNA"/>
</dbReference>
<dbReference type="EMBL" id="AF324245">
    <property type="protein sequence ID" value="AAG40617.1"/>
    <property type="molecule type" value="mRNA"/>
</dbReference>
<dbReference type="EMBL" id="AF323182">
    <property type="protein sequence ID" value="AAK15282.1"/>
    <property type="molecule type" value="mRNA"/>
</dbReference>
<dbReference type="EMBL" id="AC064879">
    <property type="protein sequence ID" value="AAG00886.1"/>
    <property type="status" value="ALT_SEQ"/>
    <property type="molecule type" value="Genomic_DNA"/>
</dbReference>
<dbReference type="EMBL" id="CP002684">
    <property type="protein sequence ID" value="AEE27418.1"/>
    <property type="molecule type" value="Genomic_DNA"/>
</dbReference>
<dbReference type="EMBL" id="AK117248">
    <property type="protein sequence ID" value="BAC41923.1"/>
    <property type="molecule type" value="mRNA"/>
</dbReference>
<dbReference type="PIR" id="G86153">
    <property type="entry name" value="G86153"/>
</dbReference>
<dbReference type="RefSeq" id="NP_563650.1">
    <property type="nucleotide sequence ID" value="NM_100115.3"/>
</dbReference>
<dbReference type="PDB" id="6QTV">
    <property type="method" value="X-ray"/>
    <property type="resolution" value="1.31 A"/>
    <property type="chains" value="B=57-66"/>
</dbReference>
<dbReference type="PDBsum" id="6QTV"/>
<dbReference type="SMR" id="Q9FE22"/>
<dbReference type="BioGRID" id="24535">
    <property type="interactions" value="26"/>
</dbReference>
<dbReference type="FunCoup" id="Q9FE22">
    <property type="interactions" value="20"/>
</dbReference>
<dbReference type="IntAct" id="Q9FE22">
    <property type="interactions" value="22"/>
</dbReference>
<dbReference type="MINT" id="Q9FE22"/>
<dbReference type="STRING" id="3702.Q9FE22"/>
<dbReference type="iPTMnet" id="Q9FE22"/>
<dbReference type="PaxDb" id="3702-AT1G02340.1"/>
<dbReference type="EnsemblPlants" id="AT1G02340.1">
    <property type="protein sequence ID" value="AT1G02340.1"/>
    <property type="gene ID" value="AT1G02340"/>
</dbReference>
<dbReference type="GeneID" id="839300"/>
<dbReference type="Gramene" id="AT1G02340.1">
    <property type="protein sequence ID" value="AT1G02340.1"/>
    <property type="gene ID" value="AT1G02340"/>
</dbReference>
<dbReference type="KEGG" id="ath:AT1G02340"/>
<dbReference type="Araport" id="AT1G02340"/>
<dbReference type="TAIR" id="AT1G02340">
    <property type="gene designation" value="HFR1"/>
</dbReference>
<dbReference type="HOGENOM" id="CLU_970936_0_0_1"/>
<dbReference type="InParanoid" id="Q9FE22"/>
<dbReference type="OMA" id="HIKDYSE"/>
<dbReference type="PhylomeDB" id="Q9FE22"/>
<dbReference type="PRO" id="PR:Q9FE22"/>
<dbReference type="Proteomes" id="UP000006548">
    <property type="component" value="Chromosome 1"/>
</dbReference>
<dbReference type="ExpressionAtlas" id="Q9FE22">
    <property type="expression patterns" value="baseline and differential"/>
</dbReference>
<dbReference type="GO" id="GO:0005829">
    <property type="term" value="C:cytosol"/>
    <property type="evidence" value="ECO:0000314"/>
    <property type="project" value="TAIR"/>
</dbReference>
<dbReference type="GO" id="GO:0005634">
    <property type="term" value="C:nucleus"/>
    <property type="evidence" value="ECO:0000314"/>
    <property type="project" value="UniProtKB"/>
</dbReference>
<dbReference type="GO" id="GO:0003700">
    <property type="term" value="F:DNA-binding transcription factor activity"/>
    <property type="evidence" value="ECO:0000250"/>
    <property type="project" value="TAIR"/>
</dbReference>
<dbReference type="GO" id="GO:0046983">
    <property type="term" value="F:protein dimerization activity"/>
    <property type="evidence" value="ECO:0007669"/>
    <property type="project" value="InterPro"/>
</dbReference>
<dbReference type="GO" id="GO:0000976">
    <property type="term" value="F:transcription cis-regulatory region binding"/>
    <property type="evidence" value="ECO:0000353"/>
    <property type="project" value="TAIR"/>
</dbReference>
<dbReference type="GO" id="GO:0003712">
    <property type="term" value="F:transcription coregulator activity"/>
    <property type="evidence" value="ECO:0000315"/>
    <property type="project" value="TAIR"/>
</dbReference>
<dbReference type="GO" id="GO:0009738">
    <property type="term" value="P:abscisic acid-activated signaling pathway"/>
    <property type="evidence" value="ECO:0000315"/>
    <property type="project" value="TAIR"/>
</dbReference>
<dbReference type="GO" id="GO:0009785">
    <property type="term" value="P:blue light signaling pathway"/>
    <property type="evidence" value="ECO:0000304"/>
    <property type="project" value="TAIR"/>
</dbReference>
<dbReference type="GO" id="GO:0009585">
    <property type="term" value="P:red, far-red light phototransduction"/>
    <property type="evidence" value="ECO:0000304"/>
    <property type="project" value="TAIR"/>
</dbReference>
<dbReference type="GO" id="GO:0009737">
    <property type="term" value="P:response to abscisic acid"/>
    <property type="evidence" value="ECO:0000270"/>
    <property type="project" value="UniProtKB"/>
</dbReference>
<dbReference type="GO" id="GO:0010218">
    <property type="term" value="P:response to far red light"/>
    <property type="evidence" value="ECO:0000314"/>
    <property type="project" value="UniProtKB"/>
</dbReference>
<dbReference type="GO" id="GO:0009408">
    <property type="term" value="P:response to heat"/>
    <property type="evidence" value="ECO:0000270"/>
    <property type="project" value="UniProtKB"/>
</dbReference>
<dbReference type="GO" id="GO:0009642">
    <property type="term" value="P:response to light intensity"/>
    <property type="evidence" value="ECO:0000270"/>
    <property type="project" value="TAIR"/>
</dbReference>
<dbReference type="GO" id="GO:1902074">
    <property type="term" value="P:response to salt"/>
    <property type="evidence" value="ECO:0000270"/>
    <property type="project" value="UniProtKB"/>
</dbReference>
<dbReference type="CDD" id="cd11445">
    <property type="entry name" value="bHLH_AtPIF_like"/>
    <property type="match status" value="1"/>
</dbReference>
<dbReference type="Gene3D" id="4.10.280.10">
    <property type="entry name" value="Helix-loop-helix DNA-binding domain"/>
    <property type="match status" value="1"/>
</dbReference>
<dbReference type="InterPro" id="IPR031066">
    <property type="entry name" value="bHLH_ALC-like_plant"/>
</dbReference>
<dbReference type="InterPro" id="IPR011598">
    <property type="entry name" value="bHLH_dom"/>
</dbReference>
<dbReference type="InterPro" id="IPR036638">
    <property type="entry name" value="HLH_DNA-bd_sf"/>
</dbReference>
<dbReference type="InterPro" id="IPR047265">
    <property type="entry name" value="PIF1-like_bHLH"/>
</dbReference>
<dbReference type="PANTHER" id="PTHR45855:SF31">
    <property type="entry name" value="TRANSCRIPTION FACTOR HFR1"/>
    <property type="match status" value="1"/>
</dbReference>
<dbReference type="PANTHER" id="PTHR45855">
    <property type="entry name" value="TRANSCRIPTION FACTOR PIF1-RELATED"/>
    <property type="match status" value="1"/>
</dbReference>
<dbReference type="Pfam" id="PF00010">
    <property type="entry name" value="HLH"/>
    <property type="match status" value="1"/>
</dbReference>
<dbReference type="SMART" id="SM00353">
    <property type="entry name" value="HLH"/>
    <property type="match status" value="1"/>
</dbReference>
<dbReference type="SUPFAM" id="SSF47459">
    <property type="entry name" value="HLH, helix-loop-helix DNA-binding domain"/>
    <property type="match status" value="1"/>
</dbReference>
<dbReference type="PROSITE" id="PS50888">
    <property type="entry name" value="BHLH"/>
    <property type="match status" value="1"/>
</dbReference>
<accession>Q9FE22</accession>
<accession>Q8GZ25</accession>
<accession>Q9FZ26</accession>
<comment type="function">
    <text evidence="4 5 8 12">Atypical bHLH transcription factor that regulates photomorphogenesis through modulation of phytochrome (e.g. PHYA) and cryptochrome signalings (PubMed:10995393, PubMed:11090209, PubMed:19482971, Ref.4). Suppresses the transcriptional regulation activity of PIF4 by forming non-DNA-binding heterodimer.</text>
</comment>
<comment type="subunit">
    <text evidence="7 8 9 10">Binds to FHY1 and FHL. Forms PHYA/FHY1/HFR1 complex (PubMed:19482971). Homodimer and heterodimer with PIF3. Do not interact alone with either phytochrome A (phyA) or B (phyB), but REP1/PIF3 complex binds to phyA and phyB, preferentially to the Pfr forms. Forms non-functional heterodimer with PRE6, causing liberation of PIF4 from the transcriptionally inactive complex HFR1-PIF4. Repressed when bound to PRE1, PRE2 and PRE4.</text>
</comment>
<comment type="interaction">
    <interactant intactId="EBI-626001">
        <id>Q9FE22</id>
    </interactant>
    <interactant intactId="EBI-2461966">
        <id>Q39079</id>
        <label>ATJ13</label>
    </interactant>
    <organismsDiffer>false</organismsDiffer>
    <experiments>3</experiments>
</comment>
<comment type="interaction">
    <interactant intactId="EBI-626001">
        <id>Q9FE22</id>
    </interactant>
    <interactant intactId="EBI-301649">
        <id>P43254</id>
        <label>COP1</label>
    </interactant>
    <organismsDiffer>false</organismsDiffer>
    <experiments>6</experiments>
</comment>
<comment type="interaction">
    <interactant intactId="EBI-626001">
        <id>Q9FE22</id>
    </interactant>
    <interactant intactId="EBI-1543309">
        <id>Q9M0K4</id>
        <label>LAF1</label>
    </interactant>
    <organismsDiffer>false</organismsDiffer>
    <experiments>6</experiments>
</comment>
<comment type="interaction">
    <interactant intactId="EBI-626001">
        <id>Q9FE22</id>
    </interactant>
    <interactant intactId="EBI-630400">
        <id>Q8GZM7</id>
        <label>PIF1</label>
    </interactant>
    <organismsDiffer>false</organismsDiffer>
    <experiments>3</experiments>
</comment>
<comment type="interaction">
    <interactant intactId="EBI-626001">
        <id>Q9FE22</id>
    </interactant>
    <interactant intactId="EBI-625701">
        <id>O80536</id>
        <label>PIF3</label>
    </interactant>
    <organismsDiffer>false</organismsDiffer>
    <experiments>6</experiments>
</comment>
<comment type="interaction">
    <interactant intactId="EBI-626001">
        <id>Q9FE22</id>
    </interactant>
    <interactant intactId="EBI-625716">
        <id>Q8W2F3</id>
        <label>PIF4</label>
    </interactant>
    <organismsDiffer>false</organismsDiffer>
    <experiments>2</experiments>
</comment>
<comment type="interaction">
    <interactant intactId="EBI-626001">
        <id>Q9FE22</id>
    </interactant>
    <interactant intactId="EBI-631622">
        <id>Q84LH8</id>
        <label>PIF5</label>
    </interactant>
    <organismsDiffer>false</organismsDiffer>
    <experiments>3</experiments>
</comment>
<comment type="interaction">
    <interactant intactId="EBI-626001">
        <id>Q9FE22</id>
    </interactant>
    <interactant intactId="EBI-626992">
        <id>Q9SYX2</id>
        <label>SPA1</label>
    </interactant>
    <organismsDiffer>false</organismsDiffer>
    <experiments>3</experiments>
</comment>
<comment type="subcellular location">
    <subcellularLocation>
        <location evidence="2 8 10">Nucleus</location>
    </subcellularLocation>
</comment>
<comment type="tissue specificity">
    <text evidence="6 11">Mainly expressed in fruits and flowers and, to a lower extent, in leaves, stems, seedlings and roots.</text>
</comment>
<comment type="developmental stage">
    <text evidence="11">Expressed in early developing seeds, later present at low levels in dry seeds (PubMed:23708772). Observed during seed imbibition (PubMed:23708772).</text>
</comment>
<comment type="induction">
    <text evidence="11">Twofold induction by far-red light and 14-fold suppression by red light. Up-regulated by abscisic acid (ABA), heat and salt (NaCl) (PubMed:23708772). Follows a free-running robust circadian rhythm, with higher levels during the light phase (PubMed:23708772).</text>
</comment>
<comment type="disruption phenotype">
    <text evidence="8">Partially blind to far-red (FR). Impaired inhibition of hypocotyl elongation and cotyledons expansion under continuous FR light conditions.</text>
</comment>
<comment type="caution">
    <text evidence="2">Contains a degenerate basic motif not likely to bind DNA.</text>
</comment>
<comment type="sequence caution" evidence="18">
    <conflict type="erroneous gene model prediction">
        <sequence resource="EMBL-CDS" id="AAG00886"/>
    </conflict>
</comment>
<name>HFR1_ARATH</name>
<evidence type="ECO:0000255" key="1">
    <source>
        <dbReference type="PROSITE-ProRule" id="PRU00768"/>
    </source>
</evidence>
<evidence type="ECO:0000255" key="2">
    <source>
        <dbReference type="PROSITE-ProRule" id="PRU00981"/>
    </source>
</evidence>
<evidence type="ECO:0000256" key="3">
    <source>
        <dbReference type="SAM" id="MobiDB-lite"/>
    </source>
</evidence>
<evidence type="ECO:0000269" key="4">
    <source>
    </source>
</evidence>
<evidence type="ECO:0000269" key="5">
    <source>
    </source>
</evidence>
<evidence type="ECO:0000269" key="6">
    <source>
    </source>
</evidence>
<evidence type="ECO:0000269" key="7">
    <source>
    </source>
</evidence>
<evidence type="ECO:0000269" key="8">
    <source>
    </source>
</evidence>
<evidence type="ECO:0000269" key="9">
    <source>
    </source>
</evidence>
<evidence type="ECO:0000269" key="10">
    <source>
    </source>
</evidence>
<evidence type="ECO:0000269" key="11">
    <source>
    </source>
</evidence>
<evidence type="ECO:0000269" key="12">
    <source ref="4"/>
</evidence>
<evidence type="ECO:0000303" key="13">
    <source>
    </source>
</evidence>
<evidence type="ECO:0000303" key="14">
    <source>
    </source>
</evidence>
<evidence type="ECO:0000303" key="15">
    <source>
    </source>
</evidence>
<evidence type="ECO:0000303" key="16">
    <source>
    </source>
</evidence>
<evidence type="ECO:0000303" key="17">
    <source ref="4"/>
</evidence>
<evidence type="ECO:0000305" key="18"/>
<feature type="chain" id="PRO_0000127430" description="Transcription factor HFR1">
    <location>
        <begin position="1"/>
        <end position="292"/>
    </location>
</feature>
<feature type="domain" description="bHLH" evidence="2">
    <location>
        <begin position="134"/>
        <end position="183"/>
    </location>
</feature>
<feature type="region of interest" description="Disordered" evidence="3">
    <location>
        <begin position="114"/>
        <end position="153"/>
    </location>
</feature>
<feature type="region of interest" description="Basic motif; degenerate" evidence="2">
    <location>
        <begin position="134"/>
        <end position="147"/>
    </location>
</feature>
<feature type="region of interest" description="Helix-loop-helix motif" evidence="2">
    <location>
        <begin position="148"/>
        <end position="183"/>
    </location>
</feature>
<feature type="short sequence motif" description="Nuclear localization signal" evidence="1">
    <location>
        <begin position="141"/>
        <end position="148"/>
    </location>
</feature>
<feature type="compositionally biased region" description="Basic residues" evidence="3">
    <location>
        <begin position="139"/>
        <end position="153"/>
    </location>
</feature>
<gene>
    <name evidence="13" type="primary">HFR1</name>
    <name evidence="16" type="synonym">BHLH26</name>
    <name type="synonym">EN68</name>
    <name evidence="17" type="synonym">FBI1</name>
    <name evidence="14" type="synonym">REP1</name>
    <name evidence="15" type="synonym">RSF1</name>
    <name type="ordered locus">At1g02340</name>
    <name type="ORF">T6A9.4</name>
    <name type="ORF">T6A9_13</name>
</gene>
<protein>
    <recommendedName>
        <fullName evidence="13">Transcription factor HFR1</fullName>
    </recommendedName>
    <alternativeName>
        <fullName evidence="16">Basic helix-loop-helix protein 26</fullName>
        <shortName evidence="16">AtbHLH26</shortName>
        <shortName evidence="16">bHLH 26</shortName>
    </alternativeName>
    <alternativeName>
        <fullName evidence="13">Protein LONG HYPOCOTYL IN FAR-RED 1</fullName>
    </alternativeName>
    <alternativeName>
        <fullName evidence="14">Protein REDUCED PHYTOCHROME SIGNALING</fullName>
    </alternativeName>
    <alternativeName>
        <fullName evidence="15">Reduced sensitivity to far-red light</fullName>
    </alternativeName>
    <alternativeName>
        <fullName>Transcription factor EN 68</fullName>
    </alternativeName>
    <alternativeName>
        <fullName evidence="16">bHLH transcription factor bHLH026</fullName>
    </alternativeName>
</protein>